<comment type="catalytic activity">
    <reaction evidence="1">
        <text>D-erythro-1-(imidazol-4-yl)glycerol 3-phosphate = 3-(imidazol-4-yl)-2-oxopropyl phosphate + H2O</text>
        <dbReference type="Rhea" id="RHEA:11040"/>
        <dbReference type="ChEBI" id="CHEBI:15377"/>
        <dbReference type="ChEBI" id="CHEBI:57766"/>
        <dbReference type="ChEBI" id="CHEBI:58278"/>
        <dbReference type="EC" id="4.2.1.19"/>
    </reaction>
</comment>
<comment type="pathway">
    <text evidence="1">Amino-acid biosynthesis; L-histidine biosynthesis; L-histidine from 5-phospho-alpha-D-ribose 1-diphosphate: step 6/9.</text>
</comment>
<comment type="subcellular location">
    <subcellularLocation>
        <location evidence="1">Cytoplasm</location>
    </subcellularLocation>
</comment>
<comment type="similarity">
    <text evidence="1">Belongs to the imidazoleglycerol-phosphate dehydratase family.</text>
</comment>
<organism>
    <name type="scientific">Streptomyces griseus subsp. griseus (strain JCM 4626 / CBS 651.72 / NBRC 13350 / KCC S-0626 / ISP 5235)</name>
    <dbReference type="NCBI Taxonomy" id="455632"/>
    <lineage>
        <taxon>Bacteria</taxon>
        <taxon>Bacillati</taxon>
        <taxon>Actinomycetota</taxon>
        <taxon>Actinomycetes</taxon>
        <taxon>Kitasatosporales</taxon>
        <taxon>Streptomycetaceae</taxon>
        <taxon>Streptomyces</taxon>
    </lineage>
</organism>
<feature type="chain" id="PRO_1000092715" description="Imidazoleglycerol-phosphate dehydratase">
    <location>
        <begin position="1"/>
        <end position="198"/>
    </location>
</feature>
<evidence type="ECO:0000255" key="1">
    <source>
        <dbReference type="HAMAP-Rule" id="MF_00076"/>
    </source>
</evidence>
<sequence length="198" mass="21687">MSPRVGRVERTTKETSVLVEINLDGTGKVDVATGVGFYDHMLDQLGRHGLFDLTVKTEGDLHIDTHHTIEDTALALGAAFKQALGDKVGIYRFGNCTVPLDESLAQVTVDLSGRPYLVHTEPENMAPMIGTYDTTMTRHIFESFVAQAQIALHIHVPYGRNAHHIVECQFKALARALRYASEHDPRAAGILPSTKGAL</sequence>
<protein>
    <recommendedName>
        <fullName evidence="1">Imidazoleglycerol-phosphate dehydratase</fullName>
        <shortName evidence="1">IGPD</shortName>
        <ecNumber evidence="1">4.2.1.19</ecNumber>
    </recommendedName>
</protein>
<keyword id="KW-0028">Amino-acid biosynthesis</keyword>
<keyword id="KW-0963">Cytoplasm</keyword>
<keyword id="KW-0368">Histidine biosynthesis</keyword>
<keyword id="KW-0456">Lyase</keyword>
<gene>
    <name evidence="1" type="primary">hisB</name>
    <name type="ordered locus">SGR_5452</name>
</gene>
<name>HIS7_STRGG</name>
<reference key="1">
    <citation type="journal article" date="2008" name="J. Bacteriol.">
        <title>Genome sequence of the streptomycin-producing microorganism Streptomyces griseus IFO 13350.</title>
        <authorList>
            <person name="Ohnishi Y."/>
            <person name="Ishikawa J."/>
            <person name="Hara H."/>
            <person name="Suzuki H."/>
            <person name="Ikenoya M."/>
            <person name="Ikeda H."/>
            <person name="Yamashita A."/>
            <person name="Hattori M."/>
            <person name="Horinouchi S."/>
        </authorList>
    </citation>
    <scope>NUCLEOTIDE SEQUENCE [LARGE SCALE GENOMIC DNA]</scope>
    <source>
        <strain>JCM 4626 / CBS 651.72 / NBRC 13350 / KCC S-0626 / ISP 5235</strain>
    </source>
</reference>
<accession>B1W0M1</accession>
<proteinExistence type="inferred from homology"/>
<dbReference type="EC" id="4.2.1.19" evidence="1"/>
<dbReference type="EMBL" id="AP009493">
    <property type="protein sequence ID" value="BAG22281.1"/>
    <property type="molecule type" value="Genomic_DNA"/>
</dbReference>
<dbReference type="RefSeq" id="WP_003969740.1">
    <property type="nucleotide sequence ID" value="NC_010572.1"/>
</dbReference>
<dbReference type="SMR" id="B1W0M1"/>
<dbReference type="GeneID" id="91289292"/>
<dbReference type="KEGG" id="sgr:SGR_5452"/>
<dbReference type="eggNOG" id="COG0131">
    <property type="taxonomic scope" value="Bacteria"/>
</dbReference>
<dbReference type="HOGENOM" id="CLU_044308_3_0_11"/>
<dbReference type="UniPathway" id="UPA00031">
    <property type="reaction ID" value="UER00011"/>
</dbReference>
<dbReference type="Proteomes" id="UP000001685">
    <property type="component" value="Chromosome"/>
</dbReference>
<dbReference type="GO" id="GO:0005737">
    <property type="term" value="C:cytoplasm"/>
    <property type="evidence" value="ECO:0007669"/>
    <property type="project" value="UniProtKB-SubCell"/>
</dbReference>
<dbReference type="GO" id="GO:0004424">
    <property type="term" value="F:imidazoleglycerol-phosphate dehydratase activity"/>
    <property type="evidence" value="ECO:0007669"/>
    <property type="project" value="UniProtKB-UniRule"/>
</dbReference>
<dbReference type="GO" id="GO:0000105">
    <property type="term" value="P:L-histidine biosynthetic process"/>
    <property type="evidence" value="ECO:0007669"/>
    <property type="project" value="UniProtKB-UniRule"/>
</dbReference>
<dbReference type="CDD" id="cd07914">
    <property type="entry name" value="IGPD"/>
    <property type="match status" value="1"/>
</dbReference>
<dbReference type="FunFam" id="3.30.230.40:FF:000001">
    <property type="entry name" value="Imidazoleglycerol-phosphate dehydratase HisB"/>
    <property type="match status" value="1"/>
</dbReference>
<dbReference type="FunFam" id="3.30.230.40:FF:000003">
    <property type="entry name" value="Imidazoleglycerol-phosphate dehydratase HisB"/>
    <property type="match status" value="1"/>
</dbReference>
<dbReference type="Gene3D" id="3.30.230.40">
    <property type="entry name" value="Imidazole glycerol phosphate dehydratase, domain 1"/>
    <property type="match status" value="2"/>
</dbReference>
<dbReference type="HAMAP" id="MF_00076">
    <property type="entry name" value="HisB"/>
    <property type="match status" value="1"/>
</dbReference>
<dbReference type="InterPro" id="IPR038494">
    <property type="entry name" value="IGPD_sf"/>
</dbReference>
<dbReference type="InterPro" id="IPR000807">
    <property type="entry name" value="ImidazoleglycerolP_deHydtase"/>
</dbReference>
<dbReference type="InterPro" id="IPR020565">
    <property type="entry name" value="ImidazoleglycerP_deHydtase_CS"/>
</dbReference>
<dbReference type="InterPro" id="IPR020568">
    <property type="entry name" value="Ribosomal_Su5_D2-typ_SF"/>
</dbReference>
<dbReference type="NCBIfam" id="NF002110">
    <property type="entry name" value="PRK00951.1-6"/>
    <property type="match status" value="1"/>
</dbReference>
<dbReference type="NCBIfam" id="NF002111">
    <property type="entry name" value="PRK00951.2-1"/>
    <property type="match status" value="1"/>
</dbReference>
<dbReference type="NCBIfam" id="NF002114">
    <property type="entry name" value="PRK00951.2-4"/>
    <property type="match status" value="1"/>
</dbReference>
<dbReference type="PANTHER" id="PTHR23133:SF2">
    <property type="entry name" value="IMIDAZOLEGLYCEROL-PHOSPHATE DEHYDRATASE"/>
    <property type="match status" value="1"/>
</dbReference>
<dbReference type="PANTHER" id="PTHR23133">
    <property type="entry name" value="IMIDAZOLEGLYCEROL-PHOSPHATE DEHYDRATASE HIS7"/>
    <property type="match status" value="1"/>
</dbReference>
<dbReference type="Pfam" id="PF00475">
    <property type="entry name" value="IGPD"/>
    <property type="match status" value="1"/>
</dbReference>
<dbReference type="SUPFAM" id="SSF54211">
    <property type="entry name" value="Ribosomal protein S5 domain 2-like"/>
    <property type="match status" value="2"/>
</dbReference>
<dbReference type="PROSITE" id="PS00954">
    <property type="entry name" value="IGP_DEHYDRATASE_1"/>
    <property type="match status" value="1"/>
</dbReference>
<dbReference type="PROSITE" id="PS00955">
    <property type="entry name" value="IGP_DEHYDRATASE_2"/>
    <property type="match status" value="1"/>
</dbReference>